<keyword id="KW-0030">Aminoacyl-tRNA synthetase</keyword>
<keyword id="KW-0067">ATP-binding</keyword>
<keyword id="KW-0963">Cytoplasm</keyword>
<keyword id="KW-0436">Ligase</keyword>
<keyword id="KW-0547">Nucleotide-binding</keyword>
<keyword id="KW-0648">Protein biosynthesis</keyword>
<keyword id="KW-1185">Reference proteome</keyword>
<comment type="function">
    <text evidence="1">Aspartyl-tRNA synthetase with relaxed tRNA specificity since it is able to aspartylate not only its cognate tRNA(Asp) but also tRNA(Asn). Reaction proceeds in two steps: L-aspartate is first activated by ATP to form Asp-AMP and then transferred to the acceptor end of tRNA(Asp/Asn).</text>
</comment>
<comment type="catalytic activity">
    <reaction evidence="1">
        <text>tRNA(Asx) + L-aspartate + ATP = L-aspartyl-tRNA(Asx) + AMP + diphosphate</text>
        <dbReference type="Rhea" id="RHEA:18349"/>
        <dbReference type="Rhea" id="RHEA-COMP:9710"/>
        <dbReference type="Rhea" id="RHEA-COMP:9711"/>
        <dbReference type="ChEBI" id="CHEBI:29991"/>
        <dbReference type="ChEBI" id="CHEBI:30616"/>
        <dbReference type="ChEBI" id="CHEBI:33019"/>
        <dbReference type="ChEBI" id="CHEBI:78442"/>
        <dbReference type="ChEBI" id="CHEBI:78516"/>
        <dbReference type="ChEBI" id="CHEBI:456215"/>
        <dbReference type="EC" id="6.1.1.23"/>
    </reaction>
</comment>
<comment type="subunit">
    <text evidence="1">Homodimer.</text>
</comment>
<comment type="subcellular location">
    <subcellularLocation>
        <location evidence="1">Cytoplasm</location>
    </subcellularLocation>
</comment>
<comment type="similarity">
    <text evidence="1">Belongs to the class-II aminoacyl-tRNA synthetase family. Type 1 subfamily.</text>
</comment>
<gene>
    <name evidence="1" type="primary">aspS</name>
    <name type="ordered locus">MAB_2865c</name>
</gene>
<dbReference type="EC" id="6.1.1.23" evidence="1"/>
<dbReference type="EMBL" id="CU458896">
    <property type="protein sequence ID" value="CAM62944.1"/>
    <property type="molecule type" value="Genomic_DNA"/>
</dbReference>
<dbReference type="RefSeq" id="WP_005082377.1">
    <property type="nucleotide sequence ID" value="NZ_MLCG01000003.1"/>
</dbReference>
<dbReference type="SMR" id="B1MCH3"/>
<dbReference type="GeneID" id="93379796"/>
<dbReference type="KEGG" id="mab:MAB_2865c"/>
<dbReference type="Proteomes" id="UP000007137">
    <property type="component" value="Chromosome"/>
</dbReference>
<dbReference type="GO" id="GO:0005737">
    <property type="term" value="C:cytoplasm"/>
    <property type="evidence" value="ECO:0007669"/>
    <property type="project" value="UniProtKB-SubCell"/>
</dbReference>
<dbReference type="GO" id="GO:0004815">
    <property type="term" value="F:aspartate-tRNA ligase activity"/>
    <property type="evidence" value="ECO:0007669"/>
    <property type="project" value="UniProtKB-UniRule"/>
</dbReference>
<dbReference type="GO" id="GO:0050560">
    <property type="term" value="F:aspartate-tRNA(Asn) ligase activity"/>
    <property type="evidence" value="ECO:0007669"/>
    <property type="project" value="UniProtKB-EC"/>
</dbReference>
<dbReference type="GO" id="GO:0005524">
    <property type="term" value="F:ATP binding"/>
    <property type="evidence" value="ECO:0007669"/>
    <property type="project" value="UniProtKB-UniRule"/>
</dbReference>
<dbReference type="GO" id="GO:0003676">
    <property type="term" value="F:nucleic acid binding"/>
    <property type="evidence" value="ECO:0007669"/>
    <property type="project" value="InterPro"/>
</dbReference>
<dbReference type="GO" id="GO:0006422">
    <property type="term" value="P:aspartyl-tRNA aminoacylation"/>
    <property type="evidence" value="ECO:0007669"/>
    <property type="project" value="UniProtKB-UniRule"/>
</dbReference>
<dbReference type="CDD" id="cd00777">
    <property type="entry name" value="AspRS_core"/>
    <property type="match status" value="1"/>
</dbReference>
<dbReference type="CDD" id="cd04317">
    <property type="entry name" value="EcAspRS_like_N"/>
    <property type="match status" value="1"/>
</dbReference>
<dbReference type="Gene3D" id="3.30.930.10">
    <property type="entry name" value="Bira Bifunctional Protein, Domain 2"/>
    <property type="match status" value="1"/>
</dbReference>
<dbReference type="Gene3D" id="3.30.1360.30">
    <property type="entry name" value="GAD-like domain"/>
    <property type="match status" value="1"/>
</dbReference>
<dbReference type="Gene3D" id="2.40.50.140">
    <property type="entry name" value="Nucleic acid-binding proteins"/>
    <property type="match status" value="1"/>
</dbReference>
<dbReference type="HAMAP" id="MF_00044">
    <property type="entry name" value="Asp_tRNA_synth_type1"/>
    <property type="match status" value="1"/>
</dbReference>
<dbReference type="InterPro" id="IPR004364">
    <property type="entry name" value="Aa-tRNA-synt_II"/>
</dbReference>
<dbReference type="InterPro" id="IPR006195">
    <property type="entry name" value="aa-tRNA-synth_II"/>
</dbReference>
<dbReference type="InterPro" id="IPR045864">
    <property type="entry name" value="aa-tRNA-synth_II/BPL/LPL"/>
</dbReference>
<dbReference type="InterPro" id="IPR004524">
    <property type="entry name" value="Asp-tRNA-ligase_1"/>
</dbReference>
<dbReference type="InterPro" id="IPR047089">
    <property type="entry name" value="Asp-tRNA-ligase_1_N"/>
</dbReference>
<dbReference type="InterPro" id="IPR002312">
    <property type="entry name" value="Asp/Asn-tRNA-synth_IIb"/>
</dbReference>
<dbReference type="InterPro" id="IPR047090">
    <property type="entry name" value="AspRS_core"/>
</dbReference>
<dbReference type="InterPro" id="IPR004115">
    <property type="entry name" value="GAD-like_sf"/>
</dbReference>
<dbReference type="InterPro" id="IPR029351">
    <property type="entry name" value="GAD_dom"/>
</dbReference>
<dbReference type="InterPro" id="IPR012340">
    <property type="entry name" value="NA-bd_OB-fold"/>
</dbReference>
<dbReference type="InterPro" id="IPR004365">
    <property type="entry name" value="NA-bd_OB_tRNA"/>
</dbReference>
<dbReference type="NCBIfam" id="TIGR00459">
    <property type="entry name" value="aspS_bact"/>
    <property type="match status" value="1"/>
</dbReference>
<dbReference type="NCBIfam" id="NF001750">
    <property type="entry name" value="PRK00476.1"/>
    <property type="match status" value="1"/>
</dbReference>
<dbReference type="PANTHER" id="PTHR22594:SF5">
    <property type="entry name" value="ASPARTATE--TRNA LIGASE, MITOCHONDRIAL"/>
    <property type="match status" value="1"/>
</dbReference>
<dbReference type="PANTHER" id="PTHR22594">
    <property type="entry name" value="ASPARTYL/LYSYL-TRNA SYNTHETASE"/>
    <property type="match status" value="1"/>
</dbReference>
<dbReference type="Pfam" id="PF02938">
    <property type="entry name" value="GAD"/>
    <property type="match status" value="1"/>
</dbReference>
<dbReference type="Pfam" id="PF00152">
    <property type="entry name" value="tRNA-synt_2"/>
    <property type="match status" value="1"/>
</dbReference>
<dbReference type="Pfam" id="PF01336">
    <property type="entry name" value="tRNA_anti-codon"/>
    <property type="match status" value="1"/>
</dbReference>
<dbReference type="PRINTS" id="PR01042">
    <property type="entry name" value="TRNASYNTHASP"/>
</dbReference>
<dbReference type="SUPFAM" id="SSF55681">
    <property type="entry name" value="Class II aaRS and biotin synthetases"/>
    <property type="match status" value="1"/>
</dbReference>
<dbReference type="SUPFAM" id="SSF55261">
    <property type="entry name" value="GAD domain-like"/>
    <property type="match status" value="1"/>
</dbReference>
<dbReference type="SUPFAM" id="SSF50249">
    <property type="entry name" value="Nucleic acid-binding proteins"/>
    <property type="match status" value="1"/>
</dbReference>
<dbReference type="PROSITE" id="PS50862">
    <property type="entry name" value="AA_TRNA_LIGASE_II"/>
    <property type="match status" value="1"/>
</dbReference>
<organism>
    <name type="scientific">Mycobacteroides abscessus (strain ATCC 19977 / DSM 44196 / CCUG 20993 / CIP 104536 / JCM 13569 / NCTC 13031 / TMC 1543 / L948)</name>
    <name type="common">Mycobacterium abscessus</name>
    <dbReference type="NCBI Taxonomy" id="561007"/>
    <lineage>
        <taxon>Bacteria</taxon>
        <taxon>Bacillati</taxon>
        <taxon>Actinomycetota</taxon>
        <taxon>Actinomycetes</taxon>
        <taxon>Mycobacteriales</taxon>
        <taxon>Mycobacteriaceae</taxon>
        <taxon>Mycobacteroides</taxon>
        <taxon>Mycobacteroides abscessus</taxon>
    </lineage>
</organism>
<proteinExistence type="inferred from homology"/>
<evidence type="ECO:0000255" key="1">
    <source>
        <dbReference type="HAMAP-Rule" id="MF_00044"/>
    </source>
</evidence>
<evidence type="ECO:0000256" key="2">
    <source>
        <dbReference type="SAM" id="MobiDB-lite"/>
    </source>
</evidence>
<reference key="1">
    <citation type="journal article" date="2009" name="PLoS ONE">
        <title>Non mycobacterial virulence genes in the genome of the emerging pathogen Mycobacterium abscessus.</title>
        <authorList>
            <person name="Ripoll F."/>
            <person name="Pasek S."/>
            <person name="Schenowitz C."/>
            <person name="Dossat C."/>
            <person name="Barbe V."/>
            <person name="Rottman M."/>
            <person name="Macheras E."/>
            <person name="Heym B."/>
            <person name="Herrmann J.L."/>
            <person name="Daffe M."/>
            <person name="Brosch R."/>
            <person name="Risler J.L."/>
            <person name="Gaillard J.L."/>
        </authorList>
    </citation>
    <scope>NUCLEOTIDE SEQUENCE [LARGE SCALE GENOMIC DNA]</scope>
    <source>
        <strain>ATCC 19977 / DSM 44196 / CCUG 20993 / CIP 104536 / JCM 13569 / NCTC 13031 / TMC 1543 / L948</strain>
    </source>
</reference>
<protein>
    <recommendedName>
        <fullName evidence="1">Aspartate--tRNA(Asp/Asn) ligase</fullName>
        <ecNumber evidence="1">6.1.1.23</ecNumber>
    </recommendedName>
    <alternativeName>
        <fullName evidence="1">Aspartyl-tRNA synthetase</fullName>
        <shortName evidence="1">AspRS</shortName>
    </alternativeName>
    <alternativeName>
        <fullName evidence="1">Non-discriminating aspartyl-tRNA synthetase</fullName>
        <shortName evidence="1">ND-AspRS</shortName>
    </alternativeName>
</protein>
<name>SYDND_MYCA9</name>
<feature type="chain" id="PRO_1000091016" description="Aspartate--tRNA(Asp/Asn) ligase">
    <location>
        <begin position="1"/>
        <end position="597"/>
    </location>
</feature>
<feature type="region of interest" description="Aspartate" evidence="1">
    <location>
        <begin position="194"/>
        <end position="197"/>
    </location>
</feature>
<feature type="region of interest" description="Disordered" evidence="2">
    <location>
        <begin position="558"/>
        <end position="597"/>
    </location>
</feature>
<feature type="compositionally biased region" description="Basic and acidic residues" evidence="2">
    <location>
        <begin position="575"/>
        <end position="597"/>
    </location>
</feature>
<feature type="binding site" evidence="1">
    <location>
        <position position="170"/>
    </location>
    <ligand>
        <name>L-aspartate</name>
        <dbReference type="ChEBI" id="CHEBI:29991"/>
    </ligand>
</feature>
<feature type="binding site" evidence="1">
    <location>
        <begin position="216"/>
        <end position="218"/>
    </location>
    <ligand>
        <name>ATP</name>
        <dbReference type="ChEBI" id="CHEBI:30616"/>
    </ligand>
</feature>
<feature type="binding site" evidence="1">
    <location>
        <position position="216"/>
    </location>
    <ligand>
        <name>L-aspartate</name>
        <dbReference type="ChEBI" id="CHEBI:29991"/>
    </ligand>
</feature>
<feature type="binding site" evidence="1">
    <location>
        <position position="225"/>
    </location>
    <ligand>
        <name>ATP</name>
        <dbReference type="ChEBI" id="CHEBI:30616"/>
    </ligand>
</feature>
<feature type="binding site" evidence="1">
    <location>
        <position position="448"/>
    </location>
    <ligand>
        <name>L-aspartate</name>
        <dbReference type="ChEBI" id="CHEBI:29991"/>
    </ligand>
</feature>
<feature type="binding site" evidence="1">
    <location>
        <position position="482"/>
    </location>
    <ligand>
        <name>ATP</name>
        <dbReference type="ChEBI" id="CHEBI:30616"/>
    </ligand>
</feature>
<feature type="binding site" evidence="1">
    <location>
        <position position="489"/>
    </location>
    <ligand>
        <name>L-aspartate</name>
        <dbReference type="ChEBI" id="CHEBI:29991"/>
    </ligand>
</feature>
<feature type="binding site" evidence="1">
    <location>
        <begin position="534"/>
        <end position="537"/>
    </location>
    <ligand>
        <name>ATP</name>
        <dbReference type="ChEBI" id="CHEBI:30616"/>
    </ligand>
</feature>
<feature type="site" description="Important for tRNA non-discrimination" evidence="1">
    <location>
        <position position="31"/>
    </location>
</feature>
<feature type="site" description="Important for tRNA non-discrimination" evidence="1">
    <location>
        <position position="80"/>
    </location>
</feature>
<sequence length="597" mass="64820">MLRTHDAGSLRESNAGQRVTLAGWVARRRDHGGVIFIDLRDASGVAQVVFREDAVLEQAHRLRAEFCVEVSGVVEVRPEGNANDEIATGQIEVNAAELKVLNESAPLPFQLDETAGEEARLRYRYLDLRREGPGNAIRLRSKANAAARSVLSGHEFVEVETPTLTRSTPEGARDFLVPARLQPGSFYALPQSPQLFKQLLMVAGMERYYQIARCYRDEDFRADRQPEFTQLDIEMSFVDQDDVIALAEEILVALWDLVGYRVPTPIDRITYAEAMRRYGSDKPDLRFGLELVECTDYFSETSFRVFQAPYVGAVVMPGGADQPRRTLDGWQEFAKQRGHKGLAYVLVGEDGTLGGPVAKNLSDAERDGLAAHVGANPGDCIFFSAGAAKSSRALLGSVRGEVAQRLGLIDPDAWAFTWVVDAPLFEPADDATAAGDVAVGSGAWTAVHHAFTSPKPESENTFDTDPGSALAYAYDIVCNGHEIGGGSIRIHRRDIQERVFQVMGISNEDAQEKFGFLLDAFAFGAPPHGGIAFGWDRVTALLAGTSSIREVIAFPKSGGGVDPLTDAPAPITAAQRKESGIDAKPEKAEKAGKPADA</sequence>
<accession>B1MCH3</accession>